<reference key="1">
    <citation type="journal article" date="1989" name="J. Gen. Microbiol.">
        <title>Nucleotide sequence of the neopullulanase gene from Bacillus stearothermophilus.</title>
        <authorList>
            <person name="Kuriki T."/>
            <person name="Imanaka T."/>
        </authorList>
    </citation>
    <scope>NUCLEOTIDE SEQUENCE [GENOMIC DNA]</scope>
    <scope>PROTEIN SEQUENCE OF 1-5</scope>
    <source>
        <strain>TRS40</strain>
    </source>
</reference>
<reference key="2">
    <citation type="journal article" date="2003" name="J. Mol. Biol.">
        <title>Three-dimensional structure and substrate binding of Bacillus stearothermophilus neopullulanase.</title>
        <authorList>
            <person name="Hondoh H."/>
            <person name="Kuriki T."/>
            <person name="Matsuura Y."/>
        </authorList>
    </citation>
    <scope>X-RAY CRYSTALLOGRAPHY (1.90 ANGSTROMS) IN COMPLEX WITH CALCIUM AND GLUCOSE</scope>
    <scope>COFACTOR</scope>
    <scope>SUBUNIT</scope>
    <scope>ACTIVE SITE</scope>
</reference>
<feature type="chain" id="PRO_0000054310" description="Neopullulanase">
    <location>
        <begin position="1"/>
        <end position="588"/>
    </location>
</feature>
<feature type="active site" description="Nucleophile" evidence="4">
    <location>
        <position position="328"/>
    </location>
</feature>
<feature type="active site" description="Proton donor" evidence="4">
    <location>
        <position position="357"/>
    </location>
</feature>
<feature type="binding site" evidence="2 5">
    <location>
        <position position="147"/>
    </location>
    <ligand>
        <name>Ca(2+)</name>
        <dbReference type="ChEBI" id="CHEBI:29108"/>
    </ligand>
</feature>
<feature type="binding site" evidence="2 5">
    <location>
        <position position="149"/>
    </location>
    <ligand>
        <name>Ca(2+)</name>
        <dbReference type="ChEBI" id="CHEBI:29108"/>
    </ligand>
</feature>
<feature type="binding site" evidence="2 5">
    <location>
        <position position="153"/>
    </location>
    <ligand>
        <name>Ca(2+)</name>
        <dbReference type="ChEBI" id="CHEBI:29108"/>
    </ligand>
</feature>
<feature type="binding site" evidence="2 5">
    <location>
        <position position="172"/>
    </location>
    <ligand>
        <name>Ca(2+)</name>
        <dbReference type="ChEBI" id="CHEBI:29108"/>
    </ligand>
</feature>
<feature type="binding site" evidence="2 5">
    <location>
        <position position="174"/>
    </location>
    <ligand>
        <name>Ca(2+)</name>
        <dbReference type="ChEBI" id="CHEBI:29108"/>
    </ligand>
</feature>
<feature type="binding site" evidence="4">
    <location>
        <position position="247"/>
    </location>
    <ligand>
        <name>substrate</name>
    </ligand>
</feature>
<feature type="binding site" evidence="4">
    <location>
        <position position="326"/>
    </location>
    <ligand>
        <name>substrate</name>
    </ligand>
</feature>
<feature type="binding site" evidence="4">
    <location>
        <begin position="423"/>
        <end position="424"/>
    </location>
    <ligand>
        <name>substrate</name>
    </ligand>
</feature>
<feature type="binding site" evidence="4">
    <location>
        <position position="468"/>
    </location>
    <ligand>
        <name>substrate</name>
    </ligand>
</feature>
<feature type="binding site" evidence="4">
    <location>
        <position position="472"/>
    </location>
    <ligand>
        <name>substrate</name>
    </ligand>
</feature>
<feature type="site" description="Transition state stabilizer" evidence="1">
    <location>
        <position position="424"/>
    </location>
</feature>
<feature type="helix" evidence="6">
    <location>
        <begin position="3"/>
        <end position="5"/>
    </location>
</feature>
<feature type="turn" evidence="6">
    <location>
        <begin position="12"/>
        <end position="14"/>
    </location>
</feature>
<feature type="strand" evidence="6">
    <location>
        <begin position="15"/>
        <end position="21"/>
    </location>
</feature>
<feature type="strand" evidence="6">
    <location>
        <begin position="23"/>
        <end position="30"/>
    </location>
</feature>
<feature type="turn" evidence="6">
    <location>
        <begin position="31"/>
        <end position="33"/>
    </location>
</feature>
<feature type="strand" evidence="6">
    <location>
        <begin position="35"/>
        <end position="42"/>
    </location>
</feature>
<feature type="strand" evidence="7">
    <location>
        <begin position="47"/>
        <end position="50"/>
    </location>
</feature>
<feature type="strand" evidence="6">
    <location>
        <begin position="55"/>
        <end position="58"/>
    </location>
</feature>
<feature type="strand" evidence="6">
    <location>
        <begin position="60"/>
        <end position="64"/>
    </location>
</feature>
<feature type="strand" evidence="6">
    <location>
        <begin position="66"/>
        <end position="75"/>
    </location>
</feature>
<feature type="strand" evidence="6">
    <location>
        <begin position="82"/>
        <end position="90"/>
    </location>
</feature>
<feature type="strand" evidence="6">
    <location>
        <begin position="93"/>
        <end position="98"/>
    </location>
</feature>
<feature type="strand" evidence="6">
    <location>
        <begin position="101"/>
        <end position="105"/>
    </location>
</feature>
<feature type="strand" evidence="6">
    <location>
        <begin position="114"/>
        <end position="117"/>
    </location>
</feature>
<feature type="helix" evidence="6">
    <location>
        <begin position="122"/>
        <end position="124"/>
    </location>
</feature>
<feature type="helix" evidence="6">
    <location>
        <begin position="130"/>
        <end position="134"/>
    </location>
</feature>
<feature type="strand" evidence="6">
    <location>
        <begin position="137"/>
        <end position="140"/>
    </location>
</feature>
<feature type="helix" evidence="6">
    <location>
        <begin position="142"/>
        <end position="144"/>
    </location>
</feature>
<feature type="helix" evidence="6">
    <location>
        <begin position="150"/>
        <end position="152"/>
    </location>
</feature>
<feature type="helix" evidence="6">
    <location>
        <begin position="175"/>
        <end position="180"/>
    </location>
</feature>
<feature type="helix" evidence="6">
    <location>
        <begin position="182"/>
        <end position="188"/>
    </location>
</feature>
<feature type="strand" evidence="6">
    <location>
        <begin position="192"/>
        <end position="195"/>
    </location>
</feature>
<feature type="strand" evidence="6">
    <location>
        <begin position="202"/>
        <end position="205"/>
    </location>
</feature>
<feature type="strand" evidence="6">
    <location>
        <begin position="210"/>
        <end position="215"/>
    </location>
</feature>
<feature type="turn" evidence="6">
    <location>
        <begin position="217"/>
        <end position="219"/>
    </location>
</feature>
<feature type="helix" evidence="6">
    <location>
        <begin position="222"/>
        <end position="234"/>
    </location>
</feature>
<feature type="strand" evidence="6">
    <location>
        <begin position="238"/>
        <end position="243"/>
    </location>
</feature>
<feature type="helix" evidence="6">
    <location>
        <begin position="253"/>
        <end position="261"/>
    </location>
</feature>
<feature type="helix" evidence="6">
    <location>
        <begin position="262"/>
        <end position="264"/>
    </location>
</feature>
<feature type="helix" evidence="6">
    <location>
        <begin position="268"/>
        <end position="270"/>
    </location>
</feature>
<feature type="strand" evidence="6">
    <location>
        <begin position="273"/>
        <end position="277"/>
    </location>
</feature>
<feature type="strand" evidence="6">
    <location>
        <begin position="281"/>
        <end position="283"/>
    </location>
</feature>
<feature type="strand" evidence="6">
    <location>
        <begin position="295"/>
        <end position="298"/>
    </location>
</feature>
<feature type="helix" evidence="6">
    <location>
        <begin position="303"/>
        <end position="320"/>
    </location>
</feature>
<feature type="strand" evidence="6">
    <location>
        <begin position="324"/>
        <end position="327"/>
    </location>
</feature>
<feature type="helix" evidence="6">
    <location>
        <begin position="330"/>
        <end position="332"/>
    </location>
</feature>
<feature type="helix" evidence="6">
    <location>
        <begin position="335"/>
        <end position="348"/>
    </location>
</feature>
<feature type="strand" evidence="6">
    <location>
        <begin position="353"/>
        <end position="356"/>
    </location>
</feature>
<feature type="helix" evidence="6">
    <location>
        <begin position="363"/>
        <end position="365"/>
    </location>
</feature>
<feature type="strand" evidence="6">
    <location>
        <begin position="367"/>
        <end position="370"/>
    </location>
</feature>
<feature type="strand" evidence="6">
    <location>
        <begin position="372"/>
        <end position="375"/>
    </location>
</feature>
<feature type="helix" evidence="6">
    <location>
        <begin position="377"/>
        <end position="387"/>
    </location>
</feature>
<feature type="helix" evidence="6">
    <location>
        <begin position="394"/>
        <end position="406"/>
    </location>
</feature>
<feature type="helix" evidence="6">
    <location>
        <begin position="410"/>
        <end position="414"/>
    </location>
</feature>
<feature type="strand" evidence="8">
    <location>
        <begin position="417"/>
        <end position="420"/>
    </location>
</feature>
<feature type="strand" evidence="8">
    <location>
        <begin position="423"/>
        <end position="425"/>
    </location>
</feature>
<feature type="helix" evidence="6">
    <location>
        <begin position="428"/>
        <end position="431"/>
    </location>
</feature>
<feature type="turn" evidence="6">
    <location>
        <begin position="432"/>
        <end position="434"/>
    </location>
</feature>
<feature type="helix" evidence="6">
    <location>
        <begin position="436"/>
        <end position="448"/>
    </location>
</feature>
<feature type="strand" evidence="6">
    <location>
        <begin position="449"/>
        <end position="451"/>
    </location>
</feature>
<feature type="strand" evidence="6">
    <location>
        <begin position="454"/>
        <end position="456"/>
    </location>
</feature>
<feature type="helix" evidence="6">
    <location>
        <begin position="459"/>
        <end position="461"/>
    </location>
</feature>
<feature type="helix" evidence="6">
    <location>
        <begin position="470"/>
        <end position="472"/>
    </location>
</feature>
<feature type="turn" evidence="6">
    <location>
        <begin position="479"/>
        <end position="481"/>
    </location>
</feature>
<feature type="helix" evidence="6">
    <location>
        <begin position="484"/>
        <end position="499"/>
    </location>
</feature>
<feature type="helix" evidence="6">
    <location>
        <begin position="501"/>
        <end position="505"/>
    </location>
</feature>
<feature type="strand" evidence="6">
    <location>
        <begin position="507"/>
        <end position="511"/>
    </location>
</feature>
<feature type="turn" evidence="6">
    <location>
        <begin position="516"/>
        <end position="518"/>
    </location>
</feature>
<feature type="strand" evidence="6">
    <location>
        <begin position="519"/>
        <end position="525"/>
    </location>
</feature>
<feature type="strand" evidence="6">
    <location>
        <begin position="530"/>
        <end position="536"/>
    </location>
</feature>
<feature type="strand" evidence="6">
    <location>
        <begin position="538"/>
        <end position="540"/>
    </location>
</feature>
<feature type="strand" evidence="6">
    <location>
        <begin position="542"/>
        <end position="545"/>
    </location>
</feature>
<feature type="strand" evidence="6">
    <location>
        <begin position="551"/>
        <end position="557"/>
    </location>
</feature>
<feature type="turn" evidence="6">
    <location>
        <begin position="558"/>
        <end position="560"/>
    </location>
</feature>
<feature type="strand" evidence="6">
    <location>
        <begin position="563"/>
        <end position="565"/>
    </location>
</feature>
<feature type="strand" evidence="6">
    <location>
        <begin position="568"/>
        <end position="570"/>
    </location>
</feature>
<feature type="strand" evidence="6">
    <location>
        <begin position="572"/>
        <end position="575"/>
    </location>
</feature>
<feature type="strand" evidence="6">
    <location>
        <begin position="580"/>
        <end position="587"/>
    </location>
</feature>
<name>NEPU_GEOSE</name>
<gene>
    <name type="primary">nplT</name>
</gene>
<sequence length="588" mass="69145">MRKEAIYHRPADNFAYAYDSETLHLRLRTKKDDIDRVELLHGDPYDWQNGAWQFQMMPMRKTGSDELFDYWFAEVKPPYRRLRYGFVLYSGEEKLVYTEKGFYFEVPTDDTAYYFCFPFLHRVDLFEAPDWVKDTVWYQIFPERFANGNPSISPEGSRPWGSEDPTPTSFFGGDLQGIIDHLDYLVDLGITGIYLTPIFRSPSNHKYDTADYFEVDPHFGDKETLKTLIDRCHEKGIRVMLDAVFNHCGYEFAPFQDVWKNGESSKYKDWFHIHEFPLQTEPRPNYDTFRFVPQMPKLNTANPEVKRYLLDVATYWIREFDIDGWRLDVANEIDHEFWREFRQEVKALKPDVYILGEIWHDAMPWLRGDQFDAVMNYPFTDGVLRFFAKEEISARQFANQMMHVLHSYPNNVNEAAFNLLGSHDTSRILTVCGGDIRKVKLLFLFQLTFTGSPCIYYGDEIGMTGGNDPECRKCMVWDPMQQNKELHQHVKQLIALRKQYRSLRRGEISFLHADDEMNYLIYKKTDGDETVLVIINRSDQKADIPIPLDARGTWLVNLLTGERFAAEAETLCTSLPPYGFVLYAIEHW</sequence>
<comment type="function">
    <text>Hydrolyzes pullulan efficiently but only a small amount of starch. Endohydrolysis of 1,4-alpha-glucosidic linkages in pullulan to form panose. Also cleaves (1-6)-alpha-glucosidic linkages to form maltotriose.</text>
</comment>
<comment type="catalytic activity">
    <reaction>
        <text>Hydrolysis of pullulan to panose (6-alpha-D-glucosylmaltose).</text>
        <dbReference type="EC" id="3.2.1.135"/>
    </reaction>
</comment>
<comment type="cofactor">
    <cofactor evidence="2">
        <name>Ca(2+)</name>
        <dbReference type="ChEBI" id="CHEBI:29108"/>
    </cofactor>
    <text evidence="2">Binds 1 Ca(2+) ion per subunit.</text>
</comment>
<comment type="subunit">
    <text evidence="2">Homodimer.</text>
</comment>
<comment type="similarity">
    <text evidence="3">Belongs to the glycosyl hydrolase 13 family.</text>
</comment>
<protein>
    <recommendedName>
        <fullName>Neopullulanase</fullName>
        <ecNumber>3.2.1.135</ecNumber>
    </recommendedName>
</protein>
<organism>
    <name type="scientific">Geobacillus stearothermophilus</name>
    <name type="common">Bacillus stearothermophilus</name>
    <dbReference type="NCBI Taxonomy" id="1422"/>
    <lineage>
        <taxon>Bacteria</taxon>
        <taxon>Bacillati</taxon>
        <taxon>Bacillota</taxon>
        <taxon>Bacilli</taxon>
        <taxon>Bacillales</taxon>
        <taxon>Anoxybacillaceae</taxon>
        <taxon>Geobacillus</taxon>
    </lineage>
</organism>
<dbReference type="EC" id="3.2.1.135"/>
<dbReference type="EMBL" id="M28138">
    <property type="protein sequence ID" value="AAA22622.1"/>
    <property type="molecule type" value="Genomic_DNA"/>
</dbReference>
<dbReference type="PIR" id="A37008">
    <property type="entry name" value="A37008"/>
</dbReference>
<dbReference type="PDB" id="1J0H">
    <property type="method" value="X-ray"/>
    <property type="resolution" value="1.90 A"/>
    <property type="chains" value="A/B=1-588"/>
</dbReference>
<dbReference type="PDB" id="1J0I">
    <property type="method" value="X-ray"/>
    <property type="resolution" value="2.40 A"/>
    <property type="chains" value="A/B=1-588"/>
</dbReference>
<dbReference type="PDB" id="1J0J">
    <property type="method" value="X-ray"/>
    <property type="resolution" value="2.80 A"/>
    <property type="chains" value="A/B=1-588"/>
</dbReference>
<dbReference type="PDB" id="1J0K">
    <property type="method" value="X-ray"/>
    <property type="resolution" value="3.20 A"/>
    <property type="chains" value="A/B=1-588"/>
</dbReference>
<dbReference type="PDBsum" id="1J0H"/>
<dbReference type="PDBsum" id="1J0I"/>
<dbReference type="PDBsum" id="1J0J"/>
<dbReference type="PDBsum" id="1J0K"/>
<dbReference type="SMR" id="P38940"/>
<dbReference type="DrugBank" id="DB02379">
    <property type="generic name" value="Beta-D-Glucose"/>
</dbReference>
<dbReference type="CAZy" id="CBM34">
    <property type="family name" value="Carbohydrate-Binding Module Family 34"/>
</dbReference>
<dbReference type="CAZy" id="GH13">
    <property type="family name" value="Glycoside Hydrolase Family 13"/>
</dbReference>
<dbReference type="KEGG" id="ag:AAA22622"/>
<dbReference type="BRENDA" id="3.2.1.135">
    <property type="organism ID" value="623"/>
</dbReference>
<dbReference type="EvolutionaryTrace" id="P38940"/>
<dbReference type="GO" id="GO:0005509">
    <property type="term" value="F:calcium ion binding"/>
    <property type="evidence" value="ECO:0000314"/>
    <property type="project" value="UniProtKB"/>
</dbReference>
<dbReference type="GO" id="GO:0005536">
    <property type="term" value="F:D-glucose binding"/>
    <property type="evidence" value="ECO:0000314"/>
    <property type="project" value="UniProtKB"/>
</dbReference>
<dbReference type="GO" id="GO:0042802">
    <property type="term" value="F:identical protein binding"/>
    <property type="evidence" value="ECO:0000314"/>
    <property type="project" value="UniProtKB"/>
</dbReference>
<dbReference type="GO" id="GO:0031216">
    <property type="term" value="F:neopullulanase activity"/>
    <property type="evidence" value="ECO:0007669"/>
    <property type="project" value="UniProtKB-EC"/>
</dbReference>
<dbReference type="GO" id="GO:0042803">
    <property type="term" value="F:protein homodimerization activity"/>
    <property type="evidence" value="ECO:0000314"/>
    <property type="project" value="UniProtKB"/>
</dbReference>
<dbReference type="GO" id="GO:0005975">
    <property type="term" value="P:carbohydrate metabolic process"/>
    <property type="evidence" value="ECO:0007669"/>
    <property type="project" value="InterPro"/>
</dbReference>
<dbReference type="CDD" id="cd11338">
    <property type="entry name" value="AmyAc_CMD"/>
    <property type="match status" value="1"/>
</dbReference>
<dbReference type="CDD" id="cd02857">
    <property type="entry name" value="E_set_CDase_PDE_N"/>
    <property type="match status" value="1"/>
</dbReference>
<dbReference type="Gene3D" id="3.20.20.80">
    <property type="entry name" value="Glycosidases"/>
    <property type="match status" value="1"/>
</dbReference>
<dbReference type="Gene3D" id="2.60.40.1180">
    <property type="entry name" value="Golgi alpha-mannosidase II"/>
    <property type="match status" value="1"/>
</dbReference>
<dbReference type="Gene3D" id="2.60.40.10">
    <property type="entry name" value="Immunoglobulins"/>
    <property type="match status" value="1"/>
</dbReference>
<dbReference type="Gene3D" id="3.90.400.10">
    <property type="entry name" value="Oligo-1,6-glucosidase, Domain 2"/>
    <property type="match status" value="1"/>
</dbReference>
<dbReference type="InterPro" id="IPR006047">
    <property type="entry name" value="Glyco_hydro_13_cat_dom"/>
</dbReference>
<dbReference type="InterPro" id="IPR004185">
    <property type="entry name" value="Glyco_hydro_13_lg-like_dom"/>
</dbReference>
<dbReference type="InterPro" id="IPR013780">
    <property type="entry name" value="Glyco_hydro_b"/>
</dbReference>
<dbReference type="InterPro" id="IPR017853">
    <property type="entry name" value="Glycoside_hydrolase_SF"/>
</dbReference>
<dbReference type="InterPro" id="IPR013783">
    <property type="entry name" value="Ig-like_fold"/>
</dbReference>
<dbReference type="InterPro" id="IPR032091">
    <property type="entry name" value="Malt_amylase-like_C"/>
</dbReference>
<dbReference type="InterPro" id="IPR045857">
    <property type="entry name" value="O16G_dom_2"/>
</dbReference>
<dbReference type="PANTHER" id="PTHR10357">
    <property type="entry name" value="ALPHA-AMYLASE FAMILY MEMBER"/>
    <property type="match status" value="1"/>
</dbReference>
<dbReference type="PANTHER" id="PTHR10357:SF210">
    <property type="entry name" value="MALTODEXTRIN GLUCOSIDASE"/>
    <property type="match status" value="1"/>
</dbReference>
<dbReference type="Pfam" id="PF00128">
    <property type="entry name" value="Alpha-amylase"/>
    <property type="match status" value="1"/>
</dbReference>
<dbReference type="Pfam" id="PF02903">
    <property type="entry name" value="Alpha-amylase_N"/>
    <property type="match status" value="1"/>
</dbReference>
<dbReference type="Pfam" id="PF16657">
    <property type="entry name" value="Malt_amylase_C"/>
    <property type="match status" value="1"/>
</dbReference>
<dbReference type="SMART" id="SM00642">
    <property type="entry name" value="Aamy"/>
    <property type="match status" value="1"/>
</dbReference>
<dbReference type="SUPFAM" id="SSF51445">
    <property type="entry name" value="(Trans)glycosidases"/>
    <property type="match status" value="1"/>
</dbReference>
<dbReference type="SUPFAM" id="SSF51011">
    <property type="entry name" value="Glycosyl hydrolase domain"/>
    <property type="match status" value="1"/>
</dbReference>
<proteinExistence type="evidence at protein level"/>
<keyword id="KW-0002">3D-structure</keyword>
<keyword id="KW-0106">Calcium</keyword>
<keyword id="KW-0903">Direct protein sequencing</keyword>
<keyword id="KW-0326">Glycosidase</keyword>
<keyword id="KW-0378">Hydrolase</keyword>
<keyword id="KW-0479">Metal-binding</keyword>
<evidence type="ECO:0000250" key="1"/>
<evidence type="ECO:0000269" key="2">
    <source>
    </source>
</evidence>
<evidence type="ECO:0000305" key="3"/>
<evidence type="ECO:0000305" key="4">
    <source>
    </source>
</evidence>
<evidence type="ECO:0007744" key="5">
    <source>
        <dbReference type="PDB" id="1J0H"/>
    </source>
</evidence>
<evidence type="ECO:0007829" key="6">
    <source>
        <dbReference type="PDB" id="1J0H"/>
    </source>
</evidence>
<evidence type="ECO:0007829" key="7">
    <source>
        <dbReference type="PDB" id="1J0I"/>
    </source>
</evidence>
<evidence type="ECO:0007829" key="8">
    <source>
        <dbReference type="PDB" id="1J0K"/>
    </source>
</evidence>
<accession>P38940</accession>